<protein>
    <recommendedName>
        <fullName evidence="7">Three-finger toxin MALT0058C</fullName>
    </recommendedName>
</protein>
<dbReference type="EMBL" id="JF754477">
    <property type="protein sequence ID" value="AED89566.1"/>
    <property type="molecule type" value="mRNA"/>
</dbReference>
<dbReference type="SMR" id="F5CPD9"/>
<dbReference type="GO" id="GO:0005576">
    <property type="term" value="C:extracellular region"/>
    <property type="evidence" value="ECO:0007669"/>
    <property type="project" value="UniProtKB-SubCell"/>
</dbReference>
<dbReference type="GO" id="GO:0030550">
    <property type="term" value="F:acetylcholine receptor inhibitor activity"/>
    <property type="evidence" value="ECO:0007669"/>
    <property type="project" value="UniProtKB-KW"/>
</dbReference>
<dbReference type="GO" id="GO:0099106">
    <property type="term" value="F:ion channel regulator activity"/>
    <property type="evidence" value="ECO:0007669"/>
    <property type="project" value="UniProtKB-KW"/>
</dbReference>
<dbReference type="GO" id="GO:0090729">
    <property type="term" value="F:toxin activity"/>
    <property type="evidence" value="ECO:0007669"/>
    <property type="project" value="UniProtKB-KW"/>
</dbReference>
<dbReference type="CDD" id="cd00206">
    <property type="entry name" value="TFP_snake_toxin"/>
    <property type="match status" value="1"/>
</dbReference>
<dbReference type="FunFam" id="2.10.60.10:FF:000024">
    <property type="entry name" value="Cytotoxin 1"/>
    <property type="match status" value="1"/>
</dbReference>
<dbReference type="Gene3D" id="2.10.60.10">
    <property type="entry name" value="CD59"/>
    <property type="match status" value="1"/>
</dbReference>
<dbReference type="InterPro" id="IPR003571">
    <property type="entry name" value="Snake_3FTx"/>
</dbReference>
<dbReference type="InterPro" id="IPR045860">
    <property type="entry name" value="Snake_toxin-like_sf"/>
</dbReference>
<dbReference type="InterPro" id="IPR018354">
    <property type="entry name" value="Snake_toxin_con_site"/>
</dbReference>
<dbReference type="InterPro" id="IPR054131">
    <property type="entry name" value="Toxin_cobra-type"/>
</dbReference>
<dbReference type="Pfam" id="PF21947">
    <property type="entry name" value="Toxin_cobra-type"/>
    <property type="match status" value="1"/>
</dbReference>
<dbReference type="SUPFAM" id="SSF57302">
    <property type="entry name" value="Snake toxin-like"/>
    <property type="match status" value="1"/>
</dbReference>
<dbReference type="PROSITE" id="PS00272">
    <property type="entry name" value="SNAKE_TOXIN"/>
    <property type="match status" value="1"/>
</dbReference>
<keyword id="KW-0008">Acetylcholine receptor inhibiting toxin</keyword>
<keyword id="KW-0903">Direct protein sequencing</keyword>
<keyword id="KW-1015">Disulfide bond</keyword>
<keyword id="KW-0872">Ion channel impairing toxin</keyword>
<keyword id="KW-0528">Neurotoxin</keyword>
<keyword id="KW-0629">Postsynaptic neurotoxin</keyword>
<keyword id="KW-0964">Secreted</keyword>
<keyword id="KW-0732">Signal</keyword>
<keyword id="KW-0800">Toxin</keyword>
<feature type="signal peptide" evidence="3">
    <location>
        <begin position="1"/>
        <end position="21"/>
    </location>
</feature>
<feature type="chain" id="PRO_0000422900" description="Three-finger toxin MALT0058C" evidence="6">
    <location>
        <begin position="22"/>
        <end position="83"/>
    </location>
</feature>
<feature type="disulfide bond" evidence="1">
    <location>
        <begin position="24"/>
        <end position="45"/>
    </location>
</feature>
<feature type="disulfide bond" evidence="1">
    <location>
        <begin position="38"/>
        <end position="62"/>
    </location>
</feature>
<feature type="disulfide bond" evidence="1">
    <location>
        <begin position="64"/>
        <end position="75"/>
    </location>
</feature>
<feature type="disulfide bond" evidence="1">
    <location>
        <begin position="76"/>
        <end position="81"/>
    </location>
</feature>
<sequence length="83" mass="9205">MKTLLLTLVVVTIVCLDFGHTLICYNDHGFIGKTTETCENGMTTCYEKRWTEARGTRIDRGCGCPNVKPGVNLNCCKTDRCNG</sequence>
<comment type="function">
    <text evidence="2">Binds to muscle nicotinic acetylcholine receptor (nAChR) and inhibits acetylcholine from binding to the receptor, thereby impairing neuromuscular transmission.</text>
</comment>
<comment type="subcellular location">
    <subcellularLocation>
        <location evidence="4">Secreted</location>
    </subcellularLocation>
</comment>
<comment type="tissue specificity">
    <text evidence="6">Expressed by the venom gland.</text>
</comment>
<comment type="mass spectrometry" mass="6898.1" method="Electrospray" evidence="4">
    <text>Average mass.</text>
</comment>
<comment type="similarity">
    <text evidence="5">Belongs to the three-finger toxin family. Short-chain subfamily. Type I alpha-neurotoxin sub-subfamily.</text>
</comment>
<reference key="1">
    <citation type="journal article" date="2011" name="J. Proteomics">
        <title>Snake venomics and venom gland transcriptomic analysis of Brazilian coral snakes, Micrurus altirostris and M. corallinus.</title>
        <authorList>
            <person name="Correa-Netto C."/>
            <person name="Junqueira-de-Azevedo Ide L."/>
            <person name="Silva D.A."/>
            <person name="Ho P.L."/>
            <person name="Leitao-de-Araujo M."/>
            <person name="Alves M.L."/>
            <person name="Sanz L."/>
            <person name="Foguel D."/>
            <person name="Zingali R.B."/>
            <person name="Calvete J.J."/>
        </authorList>
    </citation>
    <scope>NUCLEOTIDE SEQUENCE [MRNA]</scope>
    <scope>PROTEIN SEQUENCE OF 22-36</scope>
    <scope>MASS SPECTROMETRY</scope>
    <scope>SUBCELLULAR LOCATION</scope>
    <source>
        <tissue>Venom</tissue>
        <tissue>Venom gland</tissue>
    </source>
</reference>
<evidence type="ECO:0000250" key="1">
    <source>
        <dbReference type="UniProtKB" id="P0C1Z0"/>
    </source>
</evidence>
<evidence type="ECO:0000250" key="2">
    <source>
        <dbReference type="UniProtKB" id="P60775"/>
    </source>
</evidence>
<evidence type="ECO:0000255" key="3"/>
<evidence type="ECO:0000269" key="4">
    <source>
    </source>
</evidence>
<evidence type="ECO:0000305" key="5"/>
<evidence type="ECO:0000305" key="6">
    <source>
    </source>
</evidence>
<evidence type="ECO:0000312" key="7">
    <source>
        <dbReference type="EMBL" id="AED89566.1"/>
    </source>
</evidence>
<proteinExistence type="evidence at protein level"/>
<name>3S158_MICAT</name>
<accession>F5CPD9</accession>
<organism>
    <name type="scientific">Micrurus altirostris</name>
    <name type="common">Uruguayan coral snake</name>
    <name type="synonym">Elaps altirostris</name>
    <dbReference type="NCBI Taxonomy" id="129457"/>
    <lineage>
        <taxon>Eukaryota</taxon>
        <taxon>Metazoa</taxon>
        <taxon>Chordata</taxon>
        <taxon>Craniata</taxon>
        <taxon>Vertebrata</taxon>
        <taxon>Euteleostomi</taxon>
        <taxon>Lepidosauria</taxon>
        <taxon>Squamata</taxon>
        <taxon>Bifurcata</taxon>
        <taxon>Unidentata</taxon>
        <taxon>Episquamata</taxon>
        <taxon>Toxicofera</taxon>
        <taxon>Serpentes</taxon>
        <taxon>Colubroidea</taxon>
        <taxon>Elapidae</taxon>
        <taxon>Elapinae</taxon>
        <taxon>Micrurus</taxon>
    </lineage>
</organism>